<reference key="1">
    <citation type="journal article" date="1997" name="Nature">
        <title>The complete genome sequence of the Gram-positive bacterium Bacillus subtilis.</title>
        <authorList>
            <person name="Kunst F."/>
            <person name="Ogasawara N."/>
            <person name="Moszer I."/>
            <person name="Albertini A.M."/>
            <person name="Alloni G."/>
            <person name="Azevedo V."/>
            <person name="Bertero M.G."/>
            <person name="Bessieres P."/>
            <person name="Bolotin A."/>
            <person name="Borchert S."/>
            <person name="Borriss R."/>
            <person name="Boursier L."/>
            <person name="Brans A."/>
            <person name="Braun M."/>
            <person name="Brignell S.C."/>
            <person name="Bron S."/>
            <person name="Brouillet S."/>
            <person name="Bruschi C.V."/>
            <person name="Caldwell B."/>
            <person name="Capuano V."/>
            <person name="Carter N.M."/>
            <person name="Choi S.-K."/>
            <person name="Codani J.-J."/>
            <person name="Connerton I.F."/>
            <person name="Cummings N.J."/>
            <person name="Daniel R.A."/>
            <person name="Denizot F."/>
            <person name="Devine K.M."/>
            <person name="Duesterhoeft A."/>
            <person name="Ehrlich S.D."/>
            <person name="Emmerson P.T."/>
            <person name="Entian K.-D."/>
            <person name="Errington J."/>
            <person name="Fabret C."/>
            <person name="Ferrari E."/>
            <person name="Foulger D."/>
            <person name="Fritz C."/>
            <person name="Fujita M."/>
            <person name="Fujita Y."/>
            <person name="Fuma S."/>
            <person name="Galizzi A."/>
            <person name="Galleron N."/>
            <person name="Ghim S.-Y."/>
            <person name="Glaser P."/>
            <person name="Goffeau A."/>
            <person name="Golightly E.J."/>
            <person name="Grandi G."/>
            <person name="Guiseppi G."/>
            <person name="Guy B.J."/>
            <person name="Haga K."/>
            <person name="Haiech J."/>
            <person name="Harwood C.R."/>
            <person name="Henaut A."/>
            <person name="Hilbert H."/>
            <person name="Holsappel S."/>
            <person name="Hosono S."/>
            <person name="Hullo M.-F."/>
            <person name="Itaya M."/>
            <person name="Jones L.-M."/>
            <person name="Joris B."/>
            <person name="Karamata D."/>
            <person name="Kasahara Y."/>
            <person name="Klaerr-Blanchard M."/>
            <person name="Klein C."/>
            <person name="Kobayashi Y."/>
            <person name="Koetter P."/>
            <person name="Koningstein G."/>
            <person name="Krogh S."/>
            <person name="Kumano M."/>
            <person name="Kurita K."/>
            <person name="Lapidus A."/>
            <person name="Lardinois S."/>
            <person name="Lauber J."/>
            <person name="Lazarevic V."/>
            <person name="Lee S.-M."/>
            <person name="Levine A."/>
            <person name="Liu H."/>
            <person name="Masuda S."/>
            <person name="Mauel C."/>
            <person name="Medigue C."/>
            <person name="Medina N."/>
            <person name="Mellado R.P."/>
            <person name="Mizuno M."/>
            <person name="Moestl D."/>
            <person name="Nakai S."/>
            <person name="Noback M."/>
            <person name="Noone D."/>
            <person name="O'Reilly M."/>
            <person name="Ogawa K."/>
            <person name="Ogiwara A."/>
            <person name="Oudega B."/>
            <person name="Park S.-H."/>
            <person name="Parro V."/>
            <person name="Pohl T.M."/>
            <person name="Portetelle D."/>
            <person name="Porwollik S."/>
            <person name="Prescott A.M."/>
            <person name="Presecan E."/>
            <person name="Pujic P."/>
            <person name="Purnelle B."/>
            <person name="Rapoport G."/>
            <person name="Rey M."/>
            <person name="Reynolds S."/>
            <person name="Rieger M."/>
            <person name="Rivolta C."/>
            <person name="Rocha E."/>
            <person name="Roche B."/>
            <person name="Rose M."/>
            <person name="Sadaie Y."/>
            <person name="Sato T."/>
            <person name="Scanlan E."/>
            <person name="Schleich S."/>
            <person name="Schroeter R."/>
            <person name="Scoffone F."/>
            <person name="Sekiguchi J."/>
            <person name="Sekowska A."/>
            <person name="Seror S.J."/>
            <person name="Serror P."/>
            <person name="Shin B.-S."/>
            <person name="Soldo B."/>
            <person name="Sorokin A."/>
            <person name="Tacconi E."/>
            <person name="Takagi T."/>
            <person name="Takahashi H."/>
            <person name="Takemaru K."/>
            <person name="Takeuchi M."/>
            <person name="Tamakoshi A."/>
            <person name="Tanaka T."/>
            <person name="Terpstra P."/>
            <person name="Tognoni A."/>
            <person name="Tosato V."/>
            <person name="Uchiyama S."/>
            <person name="Vandenbol M."/>
            <person name="Vannier F."/>
            <person name="Vassarotti A."/>
            <person name="Viari A."/>
            <person name="Wambutt R."/>
            <person name="Wedler E."/>
            <person name="Wedler H."/>
            <person name="Weitzenegger T."/>
            <person name="Winters P."/>
            <person name="Wipat A."/>
            <person name="Yamamoto H."/>
            <person name="Yamane K."/>
            <person name="Yasumoto K."/>
            <person name="Yata K."/>
            <person name="Yoshida K."/>
            <person name="Yoshikawa H.-F."/>
            <person name="Zumstein E."/>
            <person name="Yoshikawa H."/>
            <person name="Danchin A."/>
        </authorList>
    </citation>
    <scope>NUCLEOTIDE SEQUENCE [LARGE SCALE GENOMIC DNA]</scope>
    <source>
        <strain>168</strain>
    </source>
</reference>
<dbReference type="EMBL" id="AL009126">
    <property type="protein sequence ID" value="CAB13620.1"/>
    <property type="molecule type" value="Genomic_DNA"/>
</dbReference>
<dbReference type="PIR" id="G69886">
    <property type="entry name" value="G69886"/>
</dbReference>
<dbReference type="RefSeq" id="NP_389618.1">
    <property type="nucleotide sequence ID" value="NC_000964.3"/>
</dbReference>
<dbReference type="RefSeq" id="WP_003245262.1">
    <property type="nucleotide sequence ID" value="NZ_OZ025638.1"/>
</dbReference>
<dbReference type="FunCoup" id="O31798">
    <property type="interactions" value="12"/>
</dbReference>
<dbReference type="STRING" id="224308.BSU17360"/>
<dbReference type="PaxDb" id="224308-BSU17360"/>
<dbReference type="EnsemblBacteria" id="CAB13620">
    <property type="protein sequence ID" value="CAB13620"/>
    <property type="gene ID" value="BSU_17360"/>
</dbReference>
<dbReference type="GeneID" id="940080"/>
<dbReference type="KEGG" id="bsu:BSU17360"/>
<dbReference type="PATRIC" id="fig|224308.179.peg.1882"/>
<dbReference type="InParanoid" id="O31798"/>
<dbReference type="OrthoDB" id="2882596at2"/>
<dbReference type="BioCyc" id="BSUB:BSU17360-MONOMER"/>
<dbReference type="Proteomes" id="UP000001570">
    <property type="component" value="Chromosome"/>
</dbReference>
<protein>
    <recommendedName>
        <fullName>Uncharacterized protein YmzA</fullName>
    </recommendedName>
</protein>
<gene>
    <name type="primary">ymzA</name>
    <name type="ordered locus">BSU17360</name>
</gene>
<name>YMZA_BACSU</name>
<feature type="chain" id="PRO_0000049635" description="Uncharacterized protein YmzA">
    <location>
        <begin position="1"/>
        <end position="76"/>
    </location>
</feature>
<accession>O31798</accession>
<keyword id="KW-1185">Reference proteome</keyword>
<organism>
    <name type="scientific">Bacillus subtilis (strain 168)</name>
    <dbReference type="NCBI Taxonomy" id="224308"/>
    <lineage>
        <taxon>Bacteria</taxon>
        <taxon>Bacillati</taxon>
        <taxon>Bacillota</taxon>
        <taxon>Bacilli</taxon>
        <taxon>Bacillales</taxon>
        <taxon>Bacillaceae</taxon>
        <taxon>Bacillus</taxon>
    </lineage>
</organism>
<proteinExistence type="predicted"/>
<sequence>MKHKVIVNHWEEICEDDSCYEYGTSIIVNGKELIREASIITALKAVLEEIGADVEIEETVESEKCCDSLRKKNLDY</sequence>